<protein>
    <recommendedName>
        <fullName evidence="1">Large ribosomal subunit protein bL19</fullName>
    </recommendedName>
    <alternativeName>
        <fullName evidence="2">50S ribosomal protein L19</fullName>
    </alternativeName>
</protein>
<keyword id="KW-1185">Reference proteome</keyword>
<keyword id="KW-0687">Ribonucleoprotein</keyword>
<keyword id="KW-0689">Ribosomal protein</keyword>
<sequence>MNNIIREITNEQLRTDLPSFRPGDTLRVHVKVIEGSRERIQVFEGVVIKRRGTGVSETFTVRKISYGVGVERTFPLHSPKIDKIEVKRRGKVRRAKLYYLRNLRGKAARIKEIR</sequence>
<comment type="function">
    <text evidence="1">This protein is located at the 30S-50S ribosomal subunit interface and may play a role in the structure and function of the aminoacyl-tRNA binding site.</text>
</comment>
<comment type="similarity">
    <text evidence="1">Belongs to the bacterial ribosomal protein bL19 family.</text>
</comment>
<feature type="chain" id="PRO_0000163408" description="Large ribosomal subunit protein bL19">
    <location>
        <begin position="1"/>
        <end position="114"/>
    </location>
</feature>
<dbReference type="EMBL" id="BA000004">
    <property type="protein sequence ID" value="BAB06197.1"/>
    <property type="molecule type" value="Genomic_DNA"/>
</dbReference>
<dbReference type="PIR" id="F83959">
    <property type="entry name" value="F83959"/>
</dbReference>
<dbReference type="RefSeq" id="WP_010898629.1">
    <property type="nucleotide sequence ID" value="NC_002570.2"/>
</dbReference>
<dbReference type="SMR" id="Q9KA16"/>
<dbReference type="STRING" id="272558.gene:10728376"/>
<dbReference type="GeneID" id="87597997"/>
<dbReference type="KEGG" id="bha:BH2478"/>
<dbReference type="eggNOG" id="COG0335">
    <property type="taxonomic scope" value="Bacteria"/>
</dbReference>
<dbReference type="HOGENOM" id="CLU_103507_2_1_9"/>
<dbReference type="OrthoDB" id="9803541at2"/>
<dbReference type="Proteomes" id="UP000001258">
    <property type="component" value="Chromosome"/>
</dbReference>
<dbReference type="GO" id="GO:0022625">
    <property type="term" value="C:cytosolic large ribosomal subunit"/>
    <property type="evidence" value="ECO:0007669"/>
    <property type="project" value="TreeGrafter"/>
</dbReference>
<dbReference type="GO" id="GO:0003735">
    <property type="term" value="F:structural constituent of ribosome"/>
    <property type="evidence" value="ECO:0007669"/>
    <property type="project" value="InterPro"/>
</dbReference>
<dbReference type="GO" id="GO:0006412">
    <property type="term" value="P:translation"/>
    <property type="evidence" value="ECO:0007669"/>
    <property type="project" value="UniProtKB-UniRule"/>
</dbReference>
<dbReference type="FunFam" id="2.30.30.790:FF:000001">
    <property type="entry name" value="50S ribosomal protein L19"/>
    <property type="match status" value="1"/>
</dbReference>
<dbReference type="Gene3D" id="2.30.30.790">
    <property type="match status" value="1"/>
</dbReference>
<dbReference type="HAMAP" id="MF_00402">
    <property type="entry name" value="Ribosomal_bL19"/>
    <property type="match status" value="1"/>
</dbReference>
<dbReference type="InterPro" id="IPR001857">
    <property type="entry name" value="Ribosomal_bL19"/>
</dbReference>
<dbReference type="InterPro" id="IPR018257">
    <property type="entry name" value="Ribosomal_bL19_CS"/>
</dbReference>
<dbReference type="InterPro" id="IPR038657">
    <property type="entry name" value="Ribosomal_bL19_sf"/>
</dbReference>
<dbReference type="InterPro" id="IPR008991">
    <property type="entry name" value="Translation_prot_SH3-like_sf"/>
</dbReference>
<dbReference type="NCBIfam" id="TIGR01024">
    <property type="entry name" value="rplS_bact"/>
    <property type="match status" value="1"/>
</dbReference>
<dbReference type="PANTHER" id="PTHR15680:SF9">
    <property type="entry name" value="LARGE RIBOSOMAL SUBUNIT PROTEIN BL19M"/>
    <property type="match status" value="1"/>
</dbReference>
<dbReference type="PANTHER" id="PTHR15680">
    <property type="entry name" value="RIBOSOMAL PROTEIN L19"/>
    <property type="match status" value="1"/>
</dbReference>
<dbReference type="Pfam" id="PF01245">
    <property type="entry name" value="Ribosomal_L19"/>
    <property type="match status" value="1"/>
</dbReference>
<dbReference type="PIRSF" id="PIRSF002191">
    <property type="entry name" value="Ribosomal_L19"/>
    <property type="match status" value="1"/>
</dbReference>
<dbReference type="PRINTS" id="PR00061">
    <property type="entry name" value="RIBOSOMALL19"/>
</dbReference>
<dbReference type="SUPFAM" id="SSF50104">
    <property type="entry name" value="Translation proteins SH3-like domain"/>
    <property type="match status" value="1"/>
</dbReference>
<dbReference type="PROSITE" id="PS01015">
    <property type="entry name" value="RIBOSOMAL_L19"/>
    <property type="match status" value="1"/>
</dbReference>
<accession>Q9KA16</accession>
<gene>
    <name evidence="1" type="primary">rplS</name>
    <name type="ordered locus">BH2478</name>
</gene>
<organism>
    <name type="scientific">Halalkalibacterium halodurans (strain ATCC BAA-125 / DSM 18197 / FERM 7344 / JCM 9153 / C-125)</name>
    <name type="common">Bacillus halodurans</name>
    <dbReference type="NCBI Taxonomy" id="272558"/>
    <lineage>
        <taxon>Bacteria</taxon>
        <taxon>Bacillati</taxon>
        <taxon>Bacillota</taxon>
        <taxon>Bacilli</taxon>
        <taxon>Bacillales</taxon>
        <taxon>Bacillaceae</taxon>
        <taxon>Halalkalibacterium (ex Joshi et al. 2022)</taxon>
    </lineage>
</organism>
<name>RL19_HALH5</name>
<evidence type="ECO:0000255" key="1">
    <source>
        <dbReference type="HAMAP-Rule" id="MF_00402"/>
    </source>
</evidence>
<evidence type="ECO:0000305" key="2"/>
<reference key="1">
    <citation type="journal article" date="2000" name="Nucleic Acids Res.">
        <title>Complete genome sequence of the alkaliphilic bacterium Bacillus halodurans and genomic sequence comparison with Bacillus subtilis.</title>
        <authorList>
            <person name="Takami H."/>
            <person name="Nakasone K."/>
            <person name="Takaki Y."/>
            <person name="Maeno G."/>
            <person name="Sasaki R."/>
            <person name="Masui N."/>
            <person name="Fuji F."/>
            <person name="Hirama C."/>
            <person name="Nakamura Y."/>
            <person name="Ogasawara N."/>
            <person name="Kuhara S."/>
            <person name="Horikoshi K."/>
        </authorList>
    </citation>
    <scope>NUCLEOTIDE SEQUENCE [LARGE SCALE GENOMIC DNA]</scope>
    <source>
        <strain>ATCC BAA-125 / DSM 18197 / FERM 7344 / JCM 9153 / C-125</strain>
    </source>
</reference>
<proteinExistence type="inferred from homology"/>